<keyword id="KW-0521">NADP</keyword>
<keyword id="KW-0560">Oxidoreductase</keyword>
<keyword id="KW-0627">Porphyrin biosynthesis</keyword>
<gene>
    <name evidence="1" type="primary">hemA</name>
    <name type="ordered locus">Pisl_0096</name>
</gene>
<sequence>MDLLSPLSAIVLTYREVDTDTLGKIGEEMRKCLEQMGRGTPIYVLHTCGRVEAYLYGASPEEVQTVAETYRKYVNSVRIIAGVEAARHLFRVAAGLDSMLIGETDVLGQLEEAFDRQVRAGYTRGLLKTIVERAVRVGKRVRTETAISRGPRGLGSLSIIYVSRLLDMRQAKVAVLGAGAVGAGLAMELAARGVKKLYILNRTLEKAKEVAAKTGGEARPLTKEEVERCLRECDVVFSSVHSMEYIIDKIPEGASVKVVVDLGVPQTVASGLPVKVVRIEDLREIAEQYNAERASEIAKAEAIVEEELAILPKLLARRYIEETVSTFIETAMLAAEEEGARAGCNTATLAARTTVKRILLPLVERLKKMAEDGQIEEAVKLAQMLSQTIGRKI</sequence>
<comment type="function">
    <text evidence="1">Catalyzes the NADPH-dependent reduction of glutamyl-tRNA(Glu) to glutamate 1-semialdehyde (GSA).</text>
</comment>
<comment type="catalytic activity">
    <reaction evidence="1">
        <text>(S)-4-amino-5-oxopentanoate + tRNA(Glu) + NADP(+) = L-glutamyl-tRNA(Glu) + NADPH + H(+)</text>
        <dbReference type="Rhea" id="RHEA:12344"/>
        <dbReference type="Rhea" id="RHEA-COMP:9663"/>
        <dbReference type="Rhea" id="RHEA-COMP:9680"/>
        <dbReference type="ChEBI" id="CHEBI:15378"/>
        <dbReference type="ChEBI" id="CHEBI:57501"/>
        <dbReference type="ChEBI" id="CHEBI:57783"/>
        <dbReference type="ChEBI" id="CHEBI:58349"/>
        <dbReference type="ChEBI" id="CHEBI:78442"/>
        <dbReference type="ChEBI" id="CHEBI:78520"/>
        <dbReference type="EC" id="1.2.1.70"/>
    </reaction>
</comment>
<comment type="pathway">
    <text evidence="1">Porphyrin-containing compound metabolism; protoporphyrin-IX biosynthesis; 5-aminolevulinate from L-glutamyl-tRNA(Glu): step 1/2.</text>
</comment>
<comment type="subunit">
    <text evidence="1">Homodimer.</text>
</comment>
<comment type="domain">
    <text evidence="1">Possesses an unusual extended V-shaped dimeric structure with each monomer consisting of three distinct domains arranged along a curved 'spinal' alpha-helix. The N-terminal catalytic domain specifically recognizes the glutamate moiety of the substrate. The second domain is the NADPH-binding domain, and the third C-terminal domain is responsible for dimerization.</text>
</comment>
<comment type="miscellaneous">
    <text evidence="1">During catalysis, the active site Cys acts as a nucleophile attacking the alpha-carbonyl group of tRNA-bound glutamate with the formation of a thioester intermediate between enzyme and glutamate, and the concomitant release of tRNA(Glu). The thioester intermediate is finally reduced by direct hydride transfer from NADPH, to form the product GSA.</text>
</comment>
<comment type="similarity">
    <text evidence="1">Belongs to the glutamyl-tRNA reductase family.</text>
</comment>
<organism>
    <name type="scientific">Pyrobaculum islandicum (strain DSM 4184 / JCM 9189 / GEO3)</name>
    <dbReference type="NCBI Taxonomy" id="384616"/>
    <lineage>
        <taxon>Archaea</taxon>
        <taxon>Thermoproteota</taxon>
        <taxon>Thermoprotei</taxon>
        <taxon>Thermoproteales</taxon>
        <taxon>Thermoproteaceae</taxon>
        <taxon>Pyrobaculum</taxon>
    </lineage>
</organism>
<protein>
    <recommendedName>
        <fullName evidence="1">Glutamyl-tRNA reductase</fullName>
        <shortName evidence="1">GluTR</shortName>
        <ecNumber evidence="1">1.2.1.70</ecNumber>
    </recommendedName>
</protein>
<feature type="chain" id="PRO_1000004679" description="Glutamyl-tRNA reductase">
    <location>
        <begin position="1"/>
        <end position="393"/>
    </location>
</feature>
<feature type="active site" description="Nucleophile" evidence="1">
    <location>
        <position position="48"/>
    </location>
</feature>
<feature type="binding site" evidence="1">
    <location>
        <begin position="47"/>
        <end position="50"/>
    </location>
    <ligand>
        <name>substrate</name>
    </ligand>
</feature>
<feature type="binding site" evidence="1">
    <location>
        <position position="98"/>
    </location>
    <ligand>
        <name>substrate</name>
    </ligand>
</feature>
<feature type="binding site" evidence="1">
    <location>
        <begin position="103"/>
        <end position="105"/>
    </location>
    <ligand>
        <name>substrate</name>
    </ligand>
</feature>
<feature type="binding site" evidence="1">
    <location>
        <position position="109"/>
    </location>
    <ligand>
        <name>substrate</name>
    </ligand>
</feature>
<feature type="binding site" evidence="1">
    <location>
        <begin position="177"/>
        <end position="182"/>
    </location>
    <ligand>
        <name>NADP(+)</name>
        <dbReference type="ChEBI" id="CHEBI:58349"/>
    </ligand>
</feature>
<feature type="site" description="Important for activity" evidence="1">
    <location>
        <position position="88"/>
    </location>
</feature>
<evidence type="ECO:0000255" key="1">
    <source>
        <dbReference type="HAMAP-Rule" id="MF_00087"/>
    </source>
</evidence>
<accession>A1RQP7</accession>
<proteinExistence type="inferred from homology"/>
<name>HEM1_PYRIL</name>
<reference key="1">
    <citation type="submission" date="2006-12" db="EMBL/GenBank/DDBJ databases">
        <title>Complete sequence of Pyrobaculum islandicum DSM 4184.</title>
        <authorList>
            <person name="Copeland A."/>
            <person name="Lucas S."/>
            <person name="Lapidus A."/>
            <person name="Barry K."/>
            <person name="Detter J.C."/>
            <person name="Glavina del Rio T."/>
            <person name="Dalin E."/>
            <person name="Tice H."/>
            <person name="Pitluck S."/>
            <person name="Meincke L."/>
            <person name="Brettin T."/>
            <person name="Bruce D."/>
            <person name="Han C."/>
            <person name="Tapia R."/>
            <person name="Gilna P."/>
            <person name="Schmutz J."/>
            <person name="Larimer F."/>
            <person name="Land M."/>
            <person name="Hauser L."/>
            <person name="Kyrpides N."/>
            <person name="Mikhailova N."/>
            <person name="Cozen A.E."/>
            <person name="Fitz-Gibbon S.T."/>
            <person name="House C.H."/>
            <person name="Saltikov C."/>
            <person name="Lowe T."/>
            <person name="Richardson P."/>
        </authorList>
    </citation>
    <scope>NUCLEOTIDE SEQUENCE [LARGE SCALE GENOMIC DNA]</scope>
    <source>
        <strain>DSM 4184 / JCM 9189 / GEO3</strain>
    </source>
</reference>
<dbReference type="EC" id="1.2.1.70" evidence="1"/>
<dbReference type="EMBL" id="CP000504">
    <property type="protein sequence ID" value="ABL87279.1"/>
    <property type="molecule type" value="Genomic_DNA"/>
</dbReference>
<dbReference type="RefSeq" id="WP_011761856.1">
    <property type="nucleotide sequence ID" value="NC_008701.1"/>
</dbReference>
<dbReference type="SMR" id="A1RQP7"/>
<dbReference type="STRING" id="384616.Pisl_0096"/>
<dbReference type="GeneID" id="4616972"/>
<dbReference type="KEGG" id="pis:Pisl_0096"/>
<dbReference type="eggNOG" id="arCOG01036">
    <property type="taxonomic scope" value="Archaea"/>
</dbReference>
<dbReference type="HOGENOM" id="CLU_035113_0_0_2"/>
<dbReference type="OrthoDB" id="4562at2157"/>
<dbReference type="UniPathway" id="UPA00251">
    <property type="reaction ID" value="UER00316"/>
</dbReference>
<dbReference type="Proteomes" id="UP000002595">
    <property type="component" value="Chromosome"/>
</dbReference>
<dbReference type="GO" id="GO:0008883">
    <property type="term" value="F:glutamyl-tRNA reductase activity"/>
    <property type="evidence" value="ECO:0007669"/>
    <property type="project" value="UniProtKB-UniRule"/>
</dbReference>
<dbReference type="GO" id="GO:0050661">
    <property type="term" value="F:NADP binding"/>
    <property type="evidence" value="ECO:0007669"/>
    <property type="project" value="InterPro"/>
</dbReference>
<dbReference type="GO" id="GO:0019353">
    <property type="term" value="P:protoporphyrinogen IX biosynthetic process from glutamate"/>
    <property type="evidence" value="ECO:0007669"/>
    <property type="project" value="TreeGrafter"/>
</dbReference>
<dbReference type="Gene3D" id="3.30.460.30">
    <property type="entry name" value="Glutamyl-tRNA reductase, N-terminal domain"/>
    <property type="match status" value="1"/>
</dbReference>
<dbReference type="Gene3D" id="3.40.50.720">
    <property type="entry name" value="NAD(P)-binding Rossmann-like Domain"/>
    <property type="match status" value="1"/>
</dbReference>
<dbReference type="HAMAP" id="MF_00087">
    <property type="entry name" value="Glu_tRNA_reductase"/>
    <property type="match status" value="1"/>
</dbReference>
<dbReference type="InterPro" id="IPR000343">
    <property type="entry name" value="4pyrrol_synth_GluRdtase"/>
</dbReference>
<dbReference type="InterPro" id="IPR015895">
    <property type="entry name" value="4pyrrol_synth_GluRdtase_N"/>
</dbReference>
<dbReference type="InterPro" id="IPR018214">
    <property type="entry name" value="GluRdtase_CS"/>
</dbReference>
<dbReference type="InterPro" id="IPR036453">
    <property type="entry name" value="GluRdtase_dimer_dom_sf"/>
</dbReference>
<dbReference type="InterPro" id="IPR036343">
    <property type="entry name" value="GluRdtase_N_sf"/>
</dbReference>
<dbReference type="InterPro" id="IPR036291">
    <property type="entry name" value="NAD(P)-bd_dom_sf"/>
</dbReference>
<dbReference type="InterPro" id="IPR006151">
    <property type="entry name" value="Shikm_DH/Glu-tRNA_Rdtase"/>
</dbReference>
<dbReference type="PANTHER" id="PTHR43013">
    <property type="entry name" value="GLUTAMYL-TRNA REDUCTASE"/>
    <property type="match status" value="1"/>
</dbReference>
<dbReference type="PANTHER" id="PTHR43013:SF1">
    <property type="entry name" value="GLUTAMYL-TRNA REDUCTASE"/>
    <property type="match status" value="1"/>
</dbReference>
<dbReference type="Pfam" id="PF05201">
    <property type="entry name" value="GlutR_N"/>
    <property type="match status" value="1"/>
</dbReference>
<dbReference type="Pfam" id="PF01488">
    <property type="entry name" value="Shikimate_DH"/>
    <property type="match status" value="1"/>
</dbReference>
<dbReference type="PIRSF" id="PIRSF000445">
    <property type="entry name" value="4pyrrol_synth_GluRdtase"/>
    <property type="match status" value="1"/>
</dbReference>
<dbReference type="SUPFAM" id="SSF69742">
    <property type="entry name" value="Glutamyl tRNA-reductase catalytic, N-terminal domain"/>
    <property type="match status" value="1"/>
</dbReference>
<dbReference type="SUPFAM" id="SSF69075">
    <property type="entry name" value="Glutamyl tRNA-reductase dimerization domain"/>
    <property type="match status" value="1"/>
</dbReference>
<dbReference type="SUPFAM" id="SSF51735">
    <property type="entry name" value="NAD(P)-binding Rossmann-fold domains"/>
    <property type="match status" value="1"/>
</dbReference>
<dbReference type="PROSITE" id="PS00747">
    <property type="entry name" value="GLUTR"/>
    <property type="match status" value="1"/>
</dbReference>